<organism>
    <name type="scientific">Arabidopsis thaliana</name>
    <name type="common">Mouse-ear cress</name>
    <dbReference type="NCBI Taxonomy" id="3702"/>
    <lineage>
        <taxon>Eukaryota</taxon>
        <taxon>Viridiplantae</taxon>
        <taxon>Streptophyta</taxon>
        <taxon>Embryophyta</taxon>
        <taxon>Tracheophyta</taxon>
        <taxon>Spermatophyta</taxon>
        <taxon>Magnoliopsida</taxon>
        <taxon>eudicotyledons</taxon>
        <taxon>Gunneridae</taxon>
        <taxon>Pentapetalae</taxon>
        <taxon>rosids</taxon>
        <taxon>malvids</taxon>
        <taxon>Brassicales</taxon>
        <taxon>Brassicaceae</taxon>
        <taxon>Camelineae</taxon>
        <taxon>Arabidopsis</taxon>
    </lineage>
</organism>
<comment type="function">
    <text evidence="1">Magnesium transporter that may mediate the influx of magnesium.</text>
</comment>
<comment type="subcellular location">
    <subcellularLocation>
        <location evidence="6">Membrane</location>
        <topology evidence="6">Multi-pass membrane protein</topology>
    </subcellularLocation>
</comment>
<comment type="tissue specificity">
    <text evidence="4 5">Expressed in the whole plant except roots.</text>
</comment>
<comment type="miscellaneous">
    <text>Has the ability to complement a mutant in yeast lacking magnesium transport capability.</text>
</comment>
<comment type="similarity">
    <text evidence="6">Belongs to the CorA metal ion transporter (MIT) (TC 1.A.35.5) family.</text>
</comment>
<comment type="sequence caution" evidence="6">
    <conflict type="erroneous gene model prediction">
        <sequence resource="EMBL-CDS" id="CAB86925"/>
    </conflict>
</comment>
<feature type="chain" id="PRO_0000394168" description="Magnesium transporter MRS2-4">
    <location>
        <begin position="1"/>
        <end position="436"/>
    </location>
</feature>
<feature type="transmembrane region" description="Helical" evidence="2">
    <location>
        <begin position="372"/>
        <end position="392"/>
    </location>
</feature>
<feature type="transmembrane region" description="Helical" evidence="2">
    <location>
        <begin position="405"/>
        <end position="425"/>
    </location>
</feature>
<feature type="region of interest" description="Disordered" evidence="3">
    <location>
        <begin position="1"/>
        <end position="56"/>
    </location>
</feature>
<feature type="short sequence motif" description="Required for magnesium transport activity">
    <location>
        <begin position="392"/>
        <end position="394"/>
    </location>
</feature>
<feature type="compositionally biased region" description="Basic residues" evidence="3">
    <location>
        <begin position="12"/>
        <end position="21"/>
    </location>
</feature>
<feature type="compositionally biased region" description="Low complexity" evidence="3">
    <location>
        <begin position="44"/>
        <end position="53"/>
    </location>
</feature>
<proteinExistence type="evidence at transcript level"/>
<gene>
    <name type="primary">MRS2-4</name>
    <name type="synonym">MGT6</name>
    <name type="ordered locus">At3g58970</name>
    <name type="ORF">F17J16.20</name>
</gene>
<evidence type="ECO:0000250" key="1"/>
<evidence type="ECO:0000255" key="2"/>
<evidence type="ECO:0000256" key="3">
    <source>
        <dbReference type="SAM" id="MobiDB-lite"/>
    </source>
</evidence>
<evidence type="ECO:0000269" key="4">
    <source>
    </source>
</evidence>
<evidence type="ECO:0000269" key="5">
    <source>
    </source>
</evidence>
<evidence type="ECO:0000305" key="6"/>
<dbReference type="EMBL" id="AY150289">
    <property type="protein sequence ID" value="AAN73214.1"/>
    <property type="molecule type" value="mRNA"/>
</dbReference>
<dbReference type="EMBL" id="AL163527">
    <property type="protein sequence ID" value="CAB86925.1"/>
    <property type="status" value="ALT_SEQ"/>
    <property type="molecule type" value="Genomic_DNA"/>
</dbReference>
<dbReference type="EMBL" id="CP002686">
    <property type="protein sequence ID" value="AEE79855.1"/>
    <property type="molecule type" value="Genomic_DNA"/>
</dbReference>
<dbReference type="EMBL" id="AY057613">
    <property type="protein sequence ID" value="AAL14408.1"/>
    <property type="molecule type" value="mRNA"/>
</dbReference>
<dbReference type="EMBL" id="BT002266">
    <property type="protein sequence ID" value="AAN72277.1"/>
    <property type="molecule type" value="mRNA"/>
</dbReference>
<dbReference type="PIR" id="T47779">
    <property type="entry name" value="T47779"/>
</dbReference>
<dbReference type="RefSeq" id="NP_567076.1">
    <property type="nucleotide sequence ID" value="NM_115759.4"/>
</dbReference>
<dbReference type="SMR" id="Q93ZD7"/>
<dbReference type="BioGRID" id="10381">
    <property type="interactions" value="6"/>
</dbReference>
<dbReference type="FunCoup" id="Q93ZD7">
    <property type="interactions" value="973"/>
</dbReference>
<dbReference type="IntAct" id="Q93ZD7">
    <property type="interactions" value="6"/>
</dbReference>
<dbReference type="STRING" id="3702.Q93ZD7"/>
<dbReference type="TCDB" id="1.A.35.5.4">
    <property type="family name" value="the cora metal ion transporter (mit) family"/>
</dbReference>
<dbReference type="PaxDb" id="3702-AT3G58970.1"/>
<dbReference type="ProteomicsDB" id="238911"/>
<dbReference type="EnsemblPlants" id="AT3G58970.1">
    <property type="protein sequence ID" value="AT3G58970.1"/>
    <property type="gene ID" value="AT3G58970"/>
</dbReference>
<dbReference type="GeneID" id="825066"/>
<dbReference type="Gramene" id="AT3G58970.1">
    <property type="protein sequence ID" value="AT3G58970.1"/>
    <property type="gene ID" value="AT3G58970"/>
</dbReference>
<dbReference type="KEGG" id="ath:AT3G58970"/>
<dbReference type="Araport" id="AT3G58970"/>
<dbReference type="TAIR" id="AT3G58970">
    <property type="gene designation" value="MGT6"/>
</dbReference>
<dbReference type="eggNOG" id="KOG2662">
    <property type="taxonomic scope" value="Eukaryota"/>
</dbReference>
<dbReference type="HOGENOM" id="CLU_034694_1_0_1"/>
<dbReference type="InParanoid" id="Q93ZD7"/>
<dbReference type="OMA" id="TRNNCII"/>
<dbReference type="OrthoDB" id="10251508at2759"/>
<dbReference type="PhylomeDB" id="Q93ZD7"/>
<dbReference type="BRENDA" id="7.2.2.14">
    <property type="organism ID" value="399"/>
</dbReference>
<dbReference type="PRO" id="PR:Q93ZD7"/>
<dbReference type="Proteomes" id="UP000006548">
    <property type="component" value="Chromosome 3"/>
</dbReference>
<dbReference type="ExpressionAtlas" id="Q93ZD7">
    <property type="expression patterns" value="baseline and differential"/>
</dbReference>
<dbReference type="GO" id="GO:0016020">
    <property type="term" value="C:membrane"/>
    <property type="evidence" value="ECO:0007669"/>
    <property type="project" value="UniProtKB-SubCell"/>
</dbReference>
<dbReference type="GO" id="GO:0015095">
    <property type="term" value="F:magnesium ion transmembrane transporter activity"/>
    <property type="evidence" value="ECO:0000314"/>
    <property type="project" value="TAIR"/>
</dbReference>
<dbReference type="CDD" id="cd12823">
    <property type="entry name" value="Mrs2_Mfm1p-like"/>
    <property type="match status" value="1"/>
</dbReference>
<dbReference type="FunFam" id="2.40.128.330:FF:000001">
    <property type="entry name" value="Magnesium transporter MRS2-1"/>
    <property type="match status" value="1"/>
</dbReference>
<dbReference type="Gene3D" id="2.40.128.330">
    <property type="match status" value="1"/>
</dbReference>
<dbReference type="Gene3D" id="1.20.58.340">
    <property type="entry name" value="Magnesium transport protein CorA, transmembrane region"/>
    <property type="match status" value="1"/>
</dbReference>
<dbReference type="InterPro" id="IPR045863">
    <property type="entry name" value="CorA_TM1_TM2"/>
</dbReference>
<dbReference type="InterPro" id="IPR002523">
    <property type="entry name" value="MgTranspt_CorA/ZnTranspt_ZntB"/>
</dbReference>
<dbReference type="InterPro" id="IPR039204">
    <property type="entry name" value="MRS2-like"/>
</dbReference>
<dbReference type="PANTHER" id="PTHR13890:SF2">
    <property type="entry name" value="MAGNESIUM TRANSPORTER MRS2-4-RELATED"/>
    <property type="match status" value="1"/>
</dbReference>
<dbReference type="PANTHER" id="PTHR13890">
    <property type="entry name" value="RNA SPLICING PROTEIN MRS2, MITOCHONDRIAL"/>
    <property type="match status" value="1"/>
</dbReference>
<dbReference type="Pfam" id="PF01544">
    <property type="entry name" value="CorA"/>
    <property type="match status" value="1"/>
</dbReference>
<dbReference type="Pfam" id="PF22099">
    <property type="entry name" value="MRS2-like"/>
    <property type="match status" value="1"/>
</dbReference>
<dbReference type="SUPFAM" id="SSF144083">
    <property type="entry name" value="Magnesium transport protein CorA, transmembrane region"/>
    <property type="match status" value="1"/>
</dbReference>
<reference key="1">
    <citation type="journal article" date="2001" name="Plant Cell">
        <title>A novel family of magnesium transport genes in Arabidopsis.</title>
        <authorList>
            <person name="Li L."/>
            <person name="Tutone A.F."/>
            <person name="Drummond R.S."/>
            <person name="Gardner R.C."/>
            <person name="Luan S."/>
        </authorList>
    </citation>
    <scope>NUCLEOTIDE SEQUENCE [MRNA]</scope>
    <scope>GENE FAMILY</scope>
    <scope>TISSUE SPECIFICITY</scope>
    <source>
        <strain>cv. Landsberg erecta</strain>
    </source>
</reference>
<reference key="2">
    <citation type="journal article" date="2000" name="Nature">
        <title>Sequence and analysis of chromosome 3 of the plant Arabidopsis thaliana.</title>
        <authorList>
            <person name="Salanoubat M."/>
            <person name="Lemcke K."/>
            <person name="Rieger M."/>
            <person name="Ansorge W."/>
            <person name="Unseld M."/>
            <person name="Fartmann B."/>
            <person name="Valle G."/>
            <person name="Bloecker H."/>
            <person name="Perez-Alonso M."/>
            <person name="Obermaier B."/>
            <person name="Delseny M."/>
            <person name="Boutry M."/>
            <person name="Grivell L.A."/>
            <person name="Mache R."/>
            <person name="Puigdomenech P."/>
            <person name="De Simone V."/>
            <person name="Choisne N."/>
            <person name="Artiguenave F."/>
            <person name="Robert C."/>
            <person name="Brottier P."/>
            <person name="Wincker P."/>
            <person name="Cattolico L."/>
            <person name="Weissenbach J."/>
            <person name="Saurin W."/>
            <person name="Quetier F."/>
            <person name="Schaefer M."/>
            <person name="Mueller-Auer S."/>
            <person name="Gabel C."/>
            <person name="Fuchs M."/>
            <person name="Benes V."/>
            <person name="Wurmbach E."/>
            <person name="Drzonek H."/>
            <person name="Erfle H."/>
            <person name="Jordan N."/>
            <person name="Bangert S."/>
            <person name="Wiedelmann R."/>
            <person name="Kranz H."/>
            <person name="Voss H."/>
            <person name="Holland R."/>
            <person name="Brandt P."/>
            <person name="Nyakatura G."/>
            <person name="Vezzi A."/>
            <person name="D'Angelo M."/>
            <person name="Pallavicini A."/>
            <person name="Toppo S."/>
            <person name="Simionati B."/>
            <person name="Conrad A."/>
            <person name="Hornischer K."/>
            <person name="Kauer G."/>
            <person name="Loehnert T.-H."/>
            <person name="Nordsiek G."/>
            <person name="Reichelt J."/>
            <person name="Scharfe M."/>
            <person name="Schoen O."/>
            <person name="Bargues M."/>
            <person name="Terol J."/>
            <person name="Climent J."/>
            <person name="Navarro P."/>
            <person name="Collado C."/>
            <person name="Perez-Perez A."/>
            <person name="Ottenwaelder B."/>
            <person name="Duchemin D."/>
            <person name="Cooke R."/>
            <person name="Laudie M."/>
            <person name="Berger-Llauro C."/>
            <person name="Purnelle B."/>
            <person name="Masuy D."/>
            <person name="de Haan M."/>
            <person name="Maarse A.C."/>
            <person name="Alcaraz J.-P."/>
            <person name="Cottet A."/>
            <person name="Casacuberta E."/>
            <person name="Monfort A."/>
            <person name="Argiriou A."/>
            <person name="Flores M."/>
            <person name="Liguori R."/>
            <person name="Vitale D."/>
            <person name="Mannhaupt G."/>
            <person name="Haase D."/>
            <person name="Schoof H."/>
            <person name="Rudd S."/>
            <person name="Zaccaria P."/>
            <person name="Mewes H.-W."/>
            <person name="Mayer K.F.X."/>
            <person name="Kaul S."/>
            <person name="Town C.D."/>
            <person name="Koo H.L."/>
            <person name="Tallon L.J."/>
            <person name="Jenkins J."/>
            <person name="Rooney T."/>
            <person name="Rizzo M."/>
            <person name="Walts A."/>
            <person name="Utterback T."/>
            <person name="Fujii C.Y."/>
            <person name="Shea T.P."/>
            <person name="Creasy T.H."/>
            <person name="Haas B."/>
            <person name="Maiti R."/>
            <person name="Wu D."/>
            <person name="Peterson J."/>
            <person name="Van Aken S."/>
            <person name="Pai G."/>
            <person name="Militscher J."/>
            <person name="Sellers P."/>
            <person name="Gill J.E."/>
            <person name="Feldblyum T.V."/>
            <person name="Preuss D."/>
            <person name="Lin X."/>
            <person name="Nierman W.C."/>
            <person name="Salzberg S.L."/>
            <person name="White O."/>
            <person name="Venter J.C."/>
            <person name="Fraser C.M."/>
            <person name="Kaneko T."/>
            <person name="Nakamura Y."/>
            <person name="Sato S."/>
            <person name="Kato T."/>
            <person name="Asamizu E."/>
            <person name="Sasamoto S."/>
            <person name="Kimura T."/>
            <person name="Idesawa K."/>
            <person name="Kawashima K."/>
            <person name="Kishida Y."/>
            <person name="Kiyokawa C."/>
            <person name="Kohara M."/>
            <person name="Matsumoto M."/>
            <person name="Matsuno A."/>
            <person name="Muraki A."/>
            <person name="Nakayama S."/>
            <person name="Nakazaki N."/>
            <person name="Shinpo S."/>
            <person name="Takeuchi C."/>
            <person name="Wada T."/>
            <person name="Watanabe A."/>
            <person name="Yamada M."/>
            <person name="Yasuda M."/>
            <person name="Tabata S."/>
        </authorList>
    </citation>
    <scope>NUCLEOTIDE SEQUENCE [LARGE SCALE GENOMIC DNA]</scope>
    <source>
        <strain>cv. Columbia</strain>
    </source>
</reference>
<reference key="3">
    <citation type="journal article" date="2017" name="Plant J.">
        <title>Araport11: a complete reannotation of the Arabidopsis thaliana reference genome.</title>
        <authorList>
            <person name="Cheng C.Y."/>
            <person name="Krishnakumar V."/>
            <person name="Chan A.P."/>
            <person name="Thibaud-Nissen F."/>
            <person name="Schobel S."/>
            <person name="Town C.D."/>
        </authorList>
    </citation>
    <scope>GENOME REANNOTATION</scope>
    <source>
        <strain>cv. Columbia</strain>
    </source>
</reference>
<reference key="4">
    <citation type="journal article" date="2003" name="Science">
        <title>Empirical analysis of transcriptional activity in the Arabidopsis genome.</title>
        <authorList>
            <person name="Yamada K."/>
            <person name="Lim J."/>
            <person name="Dale J.M."/>
            <person name="Chen H."/>
            <person name="Shinn P."/>
            <person name="Palm C.J."/>
            <person name="Southwick A.M."/>
            <person name="Wu H.C."/>
            <person name="Kim C.J."/>
            <person name="Nguyen M."/>
            <person name="Pham P.K."/>
            <person name="Cheuk R.F."/>
            <person name="Karlin-Newmann G."/>
            <person name="Liu S.X."/>
            <person name="Lam B."/>
            <person name="Sakano H."/>
            <person name="Wu T."/>
            <person name="Yu G."/>
            <person name="Miranda M."/>
            <person name="Quach H.L."/>
            <person name="Tripp M."/>
            <person name="Chang C.H."/>
            <person name="Lee J.M."/>
            <person name="Toriumi M.J."/>
            <person name="Chan M.M."/>
            <person name="Tang C.C."/>
            <person name="Onodera C.S."/>
            <person name="Deng J.M."/>
            <person name="Akiyama K."/>
            <person name="Ansari Y."/>
            <person name="Arakawa T."/>
            <person name="Banh J."/>
            <person name="Banno F."/>
            <person name="Bowser L."/>
            <person name="Brooks S.Y."/>
            <person name="Carninci P."/>
            <person name="Chao Q."/>
            <person name="Choy N."/>
            <person name="Enju A."/>
            <person name="Goldsmith A.D."/>
            <person name="Gurjal M."/>
            <person name="Hansen N.F."/>
            <person name="Hayashizaki Y."/>
            <person name="Johnson-Hopson C."/>
            <person name="Hsuan V.W."/>
            <person name="Iida K."/>
            <person name="Karnes M."/>
            <person name="Khan S."/>
            <person name="Koesema E."/>
            <person name="Ishida J."/>
            <person name="Jiang P.X."/>
            <person name="Jones T."/>
            <person name="Kawai J."/>
            <person name="Kamiya A."/>
            <person name="Meyers C."/>
            <person name="Nakajima M."/>
            <person name="Narusaka M."/>
            <person name="Seki M."/>
            <person name="Sakurai T."/>
            <person name="Satou M."/>
            <person name="Tamse R."/>
            <person name="Vaysberg M."/>
            <person name="Wallender E.K."/>
            <person name="Wong C."/>
            <person name="Yamamura Y."/>
            <person name="Yuan S."/>
            <person name="Shinozaki K."/>
            <person name="Davis R.W."/>
            <person name="Theologis A."/>
            <person name="Ecker J.R."/>
        </authorList>
    </citation>
    <scope>NUCLEOTIDE SEQUENCE [LARGE SCALE MRNA]</scope>
    <source>
        <strain>cv. Columbia</strain>
    </source>
</reference>
<reference key="5">
    <citation type="journal article" date="2009" name="Plant Cell">
        <title>A root-expressed magnesium transporter of the MRS2/MGT gene family in Arabidopsis thaliana allows for growth in low-Mg2+ environments.</title>
        <authorList>
            <person name="Gebert M."/>
            <person name="Meschenmoser K."/>
            <person name="Svidova S."/>
            <person name="Weghuber J."/>
            <person name="Schweyen R."/>
            <person name="Eifler K."/>
            <person name="Lenz H."/>
            <person name="Weyand K."/>
            <person name="Knoop V."/>
        </authorList>
    </citation>
    <scope>GENE FAMILY</scope>
    <scope>NOMENCLATURE</scope>
    <scope>TISSUE SPECIFICITY</scope>
</reference>
<accession>Q93ZD7</accession>
<accession>Q9LYT9</accession>
<keyword id="KW-0406">Ion transport</keyword>
<keyword id="KW-0460">Magnesium</keyword>
<keyword id="KW-0472">Membrane</keyword>
<keyword id="KW-1185">Reference proteome</keyword>
<keyword id="KW-0812">Transmembrane</keyword>
<keyword id="KW-1133">Transmembrane helix</keyword>
<keyword id="KW-0813">Transport</keyword>
<name>MRS24_ARATH</name>
<protein>
    <recommendedName>
        <fullName>Magnesium transporter MRS2-4</fullName>
    </recommendedName>
    <alternativeName>
        <fullName>Magnesium Transporter 6</fullName>
        <shortName>AtMGT6</shortName>
    </alternativeName>
</protein>
<sequence length="436" mass="48404">MGKGPLSFRRLSSIRHRKKGSAVKDDSAQTSTPSSPPPPLPIHAGGSAVGATGKAKKKTGGARLWMRFDRTGAMEVVECDKSTIIKRASVPARDLRILGPVFSHSSNILAREKAIVVNLEVIKAIVTAEEVLLLDPLRPEVLPFVERLKQQFPQRNGNENALQASANVQSPLDPEAAEGLQSELPFEFQVLEIALEVVCSFVDKSVAALETEAWPVLDELTKNVSTENLEYVRSLKSNLTRLLARVQKVRDELEHLLDDNEDMADLYLTRKWIQNQQTEAILAGTASNSIALPAHNTSNLHRLTSNRSASMVTSNTEEDDVEDLEMLLEAYFMQLDGMRNKILTVREYIDDTEDYVNIQLDNQRNELIQLQLTLTIASFAIAAETLLASLFGMNIPCPLYSIHGVFGYFVWSVTALCIVLFMVTLGYARWKKLLGS</sequence>